<comment type="function">
    <text evidence="1">Catalyzes the hydrolysis of glutamine to glutamate and ammonia as part of the biosynthesis of pyridoxal 5'-phosphate. The resulting ammonia molecule is channeled to the active site of PdxS.</text>
</comment>
<comment type="catalytic activity">
    <reaction evidence="1">
        <text>aldehydo-D-ribose 5-phosphate + D-glyceraldehyde 3-phosphate + L-glutamine = pyridoxal 5'-phosphate + L-glutamate + phosphate + 3 H2O + H(+)</text>
        <dbReference type="Rhea" id="RHEA:31507"/>
        <dbReference type="ChEBI" id="CHEBI:15377"/>
        <dbReference type="ChEBI" id="CHEBI:15378"/>
        <dbReference type="ChEBI" id="CHEBI:29985"/>
        <dbReference type="ChEBI" id="CHEBI:43474"/>
        <dbReference type="ChEBI" id="CHEBI:58273"/>
        <dbReference type="ChEBI" id="CHEBI:58359"/>
        <dbReference type="ChEBI" id="CHEBI:59776"/>
        <dbReference type="ChEBI" id="CHEBI:597326"/>
        <dbReference type="EC" id="4.3.3.6"/>
    </reaction>
</comment>
<comment type="catalytic activity">
    <reaction evidence="1">
        <text>L-glutamine + H2O = L-glutamate + NH4(+)</text>
        <dbReference type="Rhea" id="RHEA:15889"/>
        <dbReference type="ChEBI" id="CHEBI:15377"/>
        <dbReference type="ChEBI" id="CHEBI:28938"/>
        <dbReference type="ChEBI" id="CHEBI:29985"/>
        <dbReference type="ChEBI" id="CHEBI:58359"/>
        <dbReference type="EC" id="3.5.1.2"/>
    </reaction>
</comment>
<comment type="pathway">
    <text evidence="1">Cofactor biosynthesis; pyridoxal 5'-phosphate biosynthesis.</text>
</comment>
<comment type="subunit">
    <text evidence="1">In the presence of PdxS, forms a dodecamer of heterodimers. Only shows activity in the heterodimer.</text>
</comment>
<comment type="similarity">
    <text evidence="1">Belongs to the glutaminase PdxT/SNO family.</text>
</comment>
<sequence>MKIGVLALQGAVREHIRHIELSGHEGIAVKKVEQLEEIEGLILPGGESTTLRRLMNLYGFKEALQNSTLPMFGTCAGLIVLAQDIVGEEGYLNKLNITVQRNSFGRQVDSFETELDIKGIATDIEGVFIRAPHIEKVGQGVDILCKVNEKIVAVQQGKYLGVSFHPELTDDYRVTDYFINHIVKKA</sequence>
<reference key="1">
    <citation type="journal article" date="2001" name="Lancet">
        <title>Whole genome sequencing of meticillin-resistant Staphylococcus aureus.</title>
        <authorList>
            <person name="Kuroda M."/>
            <person name="Ohta T."/>
            <person name="Uchiyama I."/>
            <person name="Baba T."/>
            <person name="Yuzawa H."/>
            <person name="Kobayashi I."/>
            <person name="Cui L."/>
            <person name="Oguchi A."/>
            <person name="Aoki K."/>
            <person name="Nagai Y."/>
            <person name="Lian J.-Q."/>
            <person name="Ito T."/>
            <person name="Kanamori M."/>
            <person name="Matsumaru H."/>
            <person name="Maruyama A."/>
            <person name="Murakami H."/>
            <person name="Hosoyama A."/>
            <person name="Mizutani-Ui Y."/>
            <person name="Takahashi N.K."/>
            <person name="Sawano T."/>
            <person name="Inoue R."/>
            <person name="Kaito C."/>
            <person name="Sekimizu K."/>
            <person name="Hirakawa H."/>
            <person name="Kuhara S."/>
            <person name="Goto S."/>
            <person name="Yabuzaki J."/>
            <person name="Kanehisa M."/>
            <person name="Yamashita A."/>
            <person name="Oshima K."/>
            <person name="Furuya K."/>
            <person name="Yoshino C."/>
            <person name="Shiba T."/>
            <person name="Hattori M."/>
            <person name="Ogasawara N."/>
            <person name="Hayashi H."/>
            <person name="Hiramatsu K."/>
        </authorList>
    </citation>
    <scope>NUCLEOTIDE SEQUENCE [LARGE SCALE GENOMIC DNA]</scope>
    <source>
        <strain>N315</strain>
    </source>
</reference>
<reference key="2">
    <citation type="submission" date="2007-10" db="UniProtKB">
        <title>Shotgun proteomic analysis of total and membrane protein extracts of S. aureus strain N315.</title>
        <authorList>
            <person name="Vaezzadeh A.R."/>
            <person name="Deshusses J."/>
            <person name="Lescuyer P."/>
            <person name="Hochstrasser D.F."/>
        </authorList>
    </citation>
    <scope>IDENTIFICATION BY MASS SPECTROMETRY [LARGE SCALE ANALYSIS]</scope>
    <source>
        <strain>N315</strain>
    </source>
</reference>
<accession>Q7A7A1</accession>
<proteinExistence type="evidence at protein level"/>
<organism>
    <name type="scientific">Staphylococcus aureus (strain N315)</name>
    <dbReference type="NCBI Taxonomy" id="158879"/>
    <lineage>
        <taxon>Bacteria</taxon>
        <taxon>Bacillati</taxon>
        <taxon>Bacillota</taxon>
        <taxon>Bacilli</taxon>
        <taxon>Bacillales</taxon>
        <taxon>Staphylococcaceae</taxon>
        <taxon>Staphylococcus</taxon>
    </lineage>
</organism>
<evidence type="ECO:0000255" key="1">
    <source>
        <dbReference type="HAMAP-Rule" id="MF_01615"/>
    </source>
</evidence>
<name>PDXT_STAAN</name>
<keyword id="KW-0315">Glutamine amidotransferase</keyword>
<keyword id="KW-0378">Hydrolase</keyword>
<keyword id="KW-0456">Lyase</keyword>
<keyword id="KW-0663">Pyridoxal phosphate</keyword>
<dbReference type="EC" id="4.3.3.6" evidence="1"/>
<dbReference type="EC" id="3.5.1.2" evidence="1"/>
<dbReference type="EMBL" id="BA000018">
    <property type="protein sequence ID" value="BAB41708.1"/>
    <property type="molecule type" value="Genomic_DNA"/>
</dbReference>
<dbReference type="PIR" id="A89819">
    <property type="entry name" value="A89819"/>
</dbReference>
<dbReference type="RefSeq" id="WP_000690439.1">
    <property type="nucleotide sequence ID" value="NC_002745.2"/>
</dbReference>
<dbReference type="SMR" id="Q7A7A1"/>
<dbReference type="EnsemblBacteria" id="BAB41708">
    <property type="protein sequence ID" value="BAB41708"/>
    <property type="gene ID" value="BAB41708"/>
</dbReference>
<dbReference type="KEGG" id="sau:SA0478"/>
<dbReference type="HOGENOM" id="CLU_069674_2_0_9"/>
<dbReference type="UniPathway" id="UPA00245"/>
<dbReference type="GO" id="GO:0005829">
    <property type="term" value="C:cytosol"/>
    <property type="evidence" value="ECO:0007669"/>
    <property type="project" value="TreeGrafter"/>
</dbReference>
<dbReference type="GO" id="GO:1903600">
    <property type="term" value="C:glutaminase complex"/>
    <property type="evidence" value="ECO:0007669"/>
    <property type="project" value="TreeGrafter"/>
</dbReference>
<dbReference type="GO" id="GO:0004359">
    <property type="term" value="F:glutaminase activity"/>
    <property type="evidence" value="ECO:0007669"/>
    <property type="project" value="UniProtKB-UniRule"/>
</dbReference>
<dbReference type="GO" id="GO:0036381">
    <property type="term" value="F:pyridoxal 5'-phosphate synthase (glutamine hydrolysing) activity"/>
    <property type="evidence" value="ECO:0007669"/>
    <property type="project" value="UniProtKB-UniRule"/>
</dbReference>
<dbReference type="GO" id="GO:0006543">
    <property type="term" value="P:glutamine catabolic process"/>
    <property type="evidence" value="ECO:0007669"/>
    <property type="project" value="UniProtKB-UniRule"/>
</dbReference>
<dbReference type="GO" id="GO:0042823">
    <property type="term" value="P:pyridoxal phosphate biosynthetic process"/>
    <property type="evidence" value="ECO:0007669"/>
    <property type="project" value="UniProtKB-UniRule"/>
</dbReference>
<dbReference type="GO" id="GO:0008614">
    <property type="term" value="P:pyridoxine metabolic process"/>
    <property type="evidence" value="ECO:0007669"/>
    <property type="project" value="TreeGrafter"/>
</dbReference>
<dbReference type="CDD" id="cd01749">
    <property type="entry name" value="GATase1_PB"/>
    <property type="match status" value="1"/>
</dbReference>
<dbReference type="FunFam" id="3.40.50.880:FF:000010">
    <property type="entry name" value="uncharacterized protein LOC100176842 isoform X2"/>
    <property type="match status" value="1"/>
</dbReference>
<dbReference type="Gene3D" id="3.40.50.880">
    <property type="match status" value="1"/>
</dbReference>
<dbReference type="HAMAP" id="MF_01615">
    <property type="entry name" value="PdxT"/>
    <property type="match status" value="1"/>
</dbReference>
<dbReference type="InterPro" id="IPR029062">
    <property type="entry name" value="Class_I_gatase-like"/>
</dbReference>
<dbReference type="InterPro" id="IPR002161">
    <property type="entry name" value="PdxT/SNO"/>
</dbReference>
<dbReference type="InterPro" id="IPR021196">
    <property type="entry name" value="PdxT/SNO_CS"/>
</dbReference>
<dbReference type="NCBIfam" id="TIGR03800">
    <property type="entry name" value="PLP_synth_Pdx2"/>
    <property type="match status" value="1"/>
</dbReference>
<dbReference type="PANTHER" id="PTHR31559">
    <property type="entry name" value="PYRIDOXAL 5'-PHOSPHATE SYNTHASE SUBUNIT SNO"/>
    <property type="match status" value="1"/>
</dbReference>
<dbReference type="PANTHER" id="PTHR31559:SF0">
    <property type="entry name" value="PYRIDOXAL 5'-PHOSPHATE SYNTHASE SUBUNIT SNO1-RELATED"/>
    <property type="match status" value="1"/>
</dbReference>
<dbReference type="Pfam" id="PF01174">
    <property type="entry name" value="SNO"/>
    <property type="match status" value="1"/>
</dbReference>
<dbReference type="PIRSF" id="PIRSF005639">
    <property type="entry name" value="Glut_amidoT_SNO"/>
    <property type="match status" value="1"/>
</dbReference>
<dbReference type="SUPFAM" id="SSF52317">
    <property type="entry name" value="Class I glutamine amidotransferase-like"/>
    <property type="match status" value="1"/>
</dbReference>
<dbReference type="PROSITE" id="PS01236">
    <property type="entry name" value="PDXT_SNO_1"/>
    <property type="match status" value="1"/>
</dbReference>
<dbReference type="PROSITE" id="PS51130">
    <property type="entry name" value="PDXT_SNO_2"/>
    <property type="match status" value="1"/>
</dbReference>
<protein>
    <recommendedName>
        <fullName evidence="1">Pyridoxal 5'-phosphate synthase subunit PdxT</fullName>
        <ecNumber evidence="1">4.3.3.6</ecNumber>
    </recommendedName>
    <alternativeName>
        <fullName evidence="1">Pdx2</fullName>
    </alternativeName>
    <alternativeName>
        <fullName evidence="1">Pyridoxal 5'-phosphate synthase glutaminase subunit</fullName>
        <ecNumber evidence="1">3.5.1.2</ecNumber>
    </alternativeName>
</protein>
<feature type="chain" id="PRO_0000135657" description="Pyridoxal 5'-phosphate synthase subunit PdxT">
    <location>
        <begin position="1"/>
        <end position="186"/>
    </location>
</feature>
<feature type="active site" description="Nucleophile" evidence="1">
    <location>
        <position position="75"/>
    </location>
</feature>
<feature type="active site" description="Charge relay system" evidence="1">
    <location>
        <position position="165"/>
    </location>
</feature>
<feature type="active site" description="Charge relay system" evidence="1">
    <location>
        <position position="167"/>
    </location>
</feature>
<feature type="binding site" evidence="1">
    <location>
        <begin position="46"/>
        <end position="48"/>
    </location>
    <ligand>
        <name>L-glutamine</name>
        <dbReference type="ChEBI" id="CHEBI:58359"/>
    </ligand>
</feature>
<feature type="binding site" evidence="1">
    <location>
        <position position="101"/>
    </location>
    <ligand>
        <name>L-glutamine</name>
        <dbReference type="ChEBI" id="CHEBI:58359"/>
    </ligand>
</feature>
<feature type="binding site" evidence="1">
    <location>
        <begin position="129"/>
        <end position="130"/>
    </location>
    <ligand>
        <name>L-glutamine</name>
        <dbReference type="ChEBI" id="CHEBI:58359"/>
    </ligand>
</feature>
<gene>
    <name evidence="1" type="primary">pdxT</name>
    <name type="ordered locus">SA0478</name>
</gene>